<name>UBIG_CAUSK</name>
<protein>
    <recommendedName>
        <fullName evidence="1">Ubiquinone biosynthesis O-methyltransferase</fullName>
    </recommendedName>
    <alternativeName>
        <fullName evidence="1">2-polyprenyl-6-hydroxyphenol methylase</fullName>
        <ecNumber evidence="1">2.1.1.222</ecNumber>
    </alternativeName>
    <alternativeName>
        <fullName evidence="1">3-demethylubiquinone 3-O-methyltransferase</fullName>
        <ecNumber evidence="1">2.1.1.64</ecNumber>
    </alternativeName>
</protein>
<comment type="function">
    <text evidence="1">O-methyltransferase that catalyzes the 2 O-methylation steps in the ubiquinone biosynthetic pathway.</text>
</comment>
<comment type="catalytic activity">
    <reaction evidence="1">
        <text>a 3-demethylubiquinol + S-adenosyl-L-methionine = a ubiquinol + S-adenosyl-L-homocysteine + H(+)</text>
        <dbReference type="Rhea" id="RHEA:44380"/>
        <dbReference type="Rhea" id="RHEA-COMP:9566"/>
        <dbReference type="Rhea" id="RHEA-COMP:10914"/>
        <dbReference type="ChEBI" id="CHEBI:15378"/>
        <dbReference type="ChEBI" id="CHEBI:17976"/>
        <dbReference type="ChEBI" id="CHEBI:57856"/>
        <dbReference type="ChEBI" id="CHEBI:59789"/>
        <dbReference type="ChEBI" id="CHEBI:84422"/>
        <dbReference type="EC" id="2.1.1.64"/>
    </reaction>
</comment>
<comment type="catalytic activity">
    <reaction evidence="1">
        <text>a 3-(all-trans-polyprenyl)benzene-1,2-diol + S-adenosyl-L-methionine = a 2-methoxy-6-(all-trans-polyprenyl)phenol + S-adenosyl-L-homocysteine + H(+)</text>
        <dbReference type="Rhea" id="RHEA:31411"/>
        <dbReference type="Rhea" id="RHEA-COMP:9550"/>
        <dbReference type="Rhea" id="RHEA-COMP:9551"/>
        <dbReference type="ChEBI" id="CHEBI:15378"/>
        <dbReference type="ChEBI" id="CHEBI:57856"/>
        <dbReference type="ChEBI" id="CHEBI:59789"/>
        <dbReference type="ChEBI" id="CHEBI:62729"/>
        <dbReference type="ChEBI" id="CHEBI:62731"/>
        <dbReference type="EC" id="2.1.1.222"/>
    </reaction>
</comment>
<comment type="pathway">
    <text evidence="1">Cofactor biosynthesis; ubiquinone biosynthesis.</text>
</comment>
<comment type="similarity">
    <text evidence="1">Belongs to the methyltransferase superfamily. UbiG/COQ3 family.</text>
</comment>
<sequence>MTQSASTAPSWSIDPADVARFSAIAAEWWDPRGKFAPLHVFNPCRLSFIREQALARFERDGNGRTPFEGLRLLDIGCGGGLLSEPMARLGFTVTAVDASEKNIKTAATHAAEQGLEIGYRPATAEQLLAEGAGPFDVVLTMEVVEHVADPGEFLRTCAKLLAPGGLMIVATLNRTLKALALAKIGAEYVLRWVPPGTHDWKQFLKPDELRAFLAGEPVDVHGPFGVAYNPLTGRWSRSADCDINYMMTVTKD</sequence>
<feature type="chain" id="PRO_1000081216" description="Ubiquinone biosynthesis O-methyltransferase">
    <location>
        <begin position="1"/>
        <end position="252"/>
    </location>
</feature>
<feature type="binding site" evidence="1">
    <location>
        <position position="45"/>
    </location>
    <ligand>
        <name>S-adenosyl-L-methionine</name>
        <dbReference type="ChEBI" id="CHEBI:59789"/>
    </ligand>
</feature>
<feature type="binding site" evidence="1">
    <location>
        <position position="76"/>
    </location>
    <ligand>
        <name>S-adenosyl-L-methionine</name>
        <dbReference type="ChEBI" id="CHEBI:59789"/>
    </ligand>
</feature>
<feature type="binding site" evidence="1">
    <location>
        <position position="97"/>
    </location>
    <ligand>
        <name>S-adenosyl-L-methionine</name>
        <dbReference type="ChEBI" id="CHEBI:59789"/>
    </ligand>
</feature>
<feature type="binding site" evidence="1">
    <location>
        <position position="141"/>
    </location>
    <ligand>
        <name>S-adenosyl-L-methionine</name>
        <dbReference type="ChEBI" id="CHEBI:59789"/>
    </ligand>
</feature>
<proteinExistence type="inferred from homology"/>
<evidence type="ECO:0000255" key="1">
    <source>
        <dbReference type="HAMAP-Rule" id="MF_00472"/>
    </source>
</evidence>
<accession>B0SW81</accession>
<reference key="1">
    <citation type="submission" date="2008-01" db="EMBL/GenBank/DDBJ databases">
        <title>Complete sequence of chromosome of Caulobacter sp. K31.</title>
        <authorList>
            <consortium name="US DOE Joint Genome Institute"/>
            <person name="Copeland A."/>
            <person name="Lucas S."/>
            <person name="Lapidus A."/>
            <person name="Barry K."/>
            <person name="Glavina del Rio T."/>
            <person name="Dalin E."/>
            <person name="Tice H."/>
            <person name="Pitluck S."/>
            <person name="Bruce D."/>
            <person name="Goodwin L."/>
            <person name="Thompson L.S."/>
            <person name="Brettin T."/>
            <person name="Detter J.C."/>
            <person name="Han C."/>
            <person name="Schmutz J."/>
            <person name="Larimer F."/>
            <person name="Land M."/>
            <person name="Hauser L."/>
            <person name="Kyrpides N."/>
            <person name="Kim E."/>
            <person name="Stephens C."/>
            <person name="Richardson P."/>
        </authorList>
    </citation>
    <scope>NUCLEOTIDE SEQUENCE [LARGE SCALE GENOMIC DNA]</scope>
    <source>
        <strain>K31</strain>
    </source>
</reference>
<dbReference type="EC" id="2.1.1.222" evidence="1"/>
<dbReference type="EC" id="2.1.1.64" evidence="1"/>
<dbReference type="EMBL" id="CP000927">
    <property type="protein sequence ID" value="ABZ70078.1"/>
    <property type="molecule type" value="Genomic_DNA"/>
</dbReference>
<dbReference type="SMR" id="B0SW81"/>
<dbReference type="STRING" id="366602.Caul_0947"/>
<dbReference type="KEGG" id="cak:Caul_0947"/>
<dbReference type="eggNOG" id="COG2227">
    <property type="taxonomic scope" value="Bacteria"/>
</dbReference>
<dbReference type="HOGENOM" id="CLU_042432_0_0_5"/>
<dbReference type="OrthoDB" id="9801538at2"/>
<dbReference type="UniPathway" id="UPA00232"/>
<dbReference type="GO" id="GO:0102208">
    <property type="term" value="F:2-polyprenyl-6-hydroxyphenol methylase activity"/>
    <property type="evidence" value="ECO:0007669"/>
    <property type="project" value="UniProtKB-EC"/>
</dbReference>
<dbReference type="GO" id="GO:0061542">
    <property type="term" value="F:3-demethylubiquinol 3-O-methyltransferase activity"/>
    <property type="evidence" value="ECO:0007669"/>
    <property type="project" value="UniProtKB-UniRule"/>
</dbReference>
<dbReference type="GO" id="GO:0010420">
    <property type="term" value="F:polyprenyldihydroxybenzoate methyltransferase activity"/>
    <property type="evidence" value="ECO:0007669"/>
    <property type="project" value="InterPro"/>
</dbReference>
<dbReference type="GO" id="GO:0032259">
    <property type="term" value="P:methylation"/>
    <property type="evidence" value="ECO:0007669"/>
    <property type="project" value="UniProtKB-KW"/>
</dbReference>
<dbReference type="CDD" id="cd02440">
    <property type="entry name" value="AdoMet_MTases"/>
    <property type="match status" value="1"/>
</dbReference>
<dbReference type="Gene3D" id="3.40.50.150">
    <property type="entry name" value="Vaccinia Virus protein VP39"/>
    <property type="match status" value="1"/>
</dbReference>
<dbReference type="HAMAP" id="MF_00472">
    <property type="entry name" value="UbiG"/>
    <property type="match status" value="1"/>
</dbReference>
<dbReference type="InterPro" id="IPR029063">
    <property type="entry name" value="SAM-dependent_MTases_sf"/>
</dbReference>
<dbReference type="InterPro" id="IPR010233">
    <property type="entry name" value="UbiG_MeTrfase"/>
</dbReference>
<dbReference type="NCBIfam" id="TIGR01983">
    <property type="entry name" value="UbiG"/>
    <property type="match status" value="1"/>
</dbReference>
<dbReference type="PANTHER" id="PTHR43464">
    <property type="entry name" value="METHYLTRANSFERASE"/>
    <property type="match status" value="1"/>
</dbReference>
<dbReference type="PANTHER" id="PTHR43464:SF19">
    <property type="entry name" value="UBIQUINONE BIOSYNTHESIS O-METHYLTRANSFERASE, MITOCHONDRIAL"/>
    <property type="match status" value="1"/>
</dbReference>
<dbReference type="Pfam" id="PF13489">
    <property type="entry name" value="Methyltransf_23"/>
    <property type="match status" value="1"/>
</dbReference>
<dbReference type="SUPFAM" id="SSF53335">
    <property type="entry name" value="S-adenosyl-L-methionine-dependent methyltransferases"/>
    <property type="match status" value="1"/>
</dbReference>
<keyword id="KW-0489">Methyltransferase</keyword>
<keyword id="KW-0949">S-adenosyl-L-methionine</keyword>
<keyword id="KW-0808">Transferase</keyword>
<keyword id="KW-0831">Ubiquinone biosynthesis</keyword>
<gene>
    <name evidence="1" type="primary">ubiG</name>
    <name type="ordered locus">Caul_0947</name>
</gene>
<organism>
    <name type="scientific">Caulobacter sp. (strain K31)</name>
    <dbReference type="NCBI Taxonomy" id="366602"/>
    <lineage>
        <taxon>Bacteria</taxon>
        <taxon>Pseudomonadati</taxon>
        <taxon>Pseudomonadota</taxon>
        <taxon>Alphaproteobacteria</taxon>
        <taxon>Caulobacterales</taxon>
        <taxon>Caulobacteraceae</taxon>
        <taxon>Caulobacter</taxon>
    </lineage>
</organism>